<gene>
    <name evidence="1" type="primary">pyrH</name>
    <name type="ordered locus">gll2340</name>
</gene>
<keyword id="KW-0067">ATP-binding</keyword>
<keyword id="KW-0963">Cytoplasm</keyword>
<keyword id="KW-0418">Kinase</keyword>
<keyword id="KW-0547">Nucleotide-binding</keyword>
<keyword id="KW-0665">Pyrimidine biosynthesis</keyword>
<keyword id="KW-1185">Reference proteome</keyword>
<keyword id="KW-0808">Transferase</keyword>
<protein>
    <recommendedName>
        <fullName evidence="1">Uridylate kinase</fullName>
        <shortName evidence="1">UK</shortName>
        <ecNumber evidence="1">2.7.4.22</ecNumber>
    </recommendedName>
    <alternativeName>
        <fullName evidence="1">Uridine monophosphate kinase</fullName>
        <shortName evidence="1">UMP kinase</shortName>
        <shortName evidence="1">UMPK</shortName>
    </alternativeName>
</protein>
<accession>Q7NI44</accession>
<feature type="chain" id="PRO_0000323857" description="Uridylate kinase">
    <location>
        <begin position="1"/>
        <end position="235"/>
    </location>
</feature>
<feature type="binding site" evidence="1">
    <location>
        <begin position="9"/>
        <end position="12"/>
    </location>
    <ligand>
        <name>ATP</name>
        <dbReference type="ChEBI" id="CHEBI:30616"/>
    </ligand>
</feature>
<feature type="binding site" evidence="1">
    <location>
        <position position="51"/>
    </location>
    <ligand>
        <name>UMP</name>
        <dbReference type="ChEBI" id="CHEBI:57865"/>
    </ligand>
</feature>
<feature type="binding site" evidence="1">
    <location>
        <position position="52"/>
    </location>
    <ligand>
        <name>ATP</name>
        <dbReference type="ChEBI" id="CHEBI:30616"/>
    </ligand>
</feature>
<feature type="binding site" evidence="1">
    <location>
        <position position="56"/>
    </location>
    <ligand>
        <name>ATP</name>
        <dbReference type="ChEBI" id="CHEBI:30616"/>
    </ligand>
</feature>
<feature type="binding site" evidence="1">
    <location>
        <position position="71"/>
    </location>
    <ligand>
        <name>UMP</name>
        <dbReference type="ChEBI" id="CHEBI:57865"/>
    </ligand>
</feature>
<feature type="binding site" evidence="1">
    <location>
        <begin position="133"/>
        <end position="140"/>
    </location>
    <ligand>
        <name>UMP</name>
        <dbReference type="ChEBI" id="CHEBI:57865"/>
    </ligand>
</feature>
<feature type="binding site" evidence="1">
    <location>
        <position position="160"/>
    </location>
    <ligand>
        <name>ATP</name>
        <dbReference type="ChEBI" id="CHEBI:30616"/>
    </ligand>
</feature>
<feature type="binding site" evidence="1">
    <location>
        <position position="166"/>
    </location>
    <ligand>
        <name>ATP</name>
        <dbReference type="ChEBI" id="CHEBI:30616"/>
    </ligand>
</feature>
<feature type="binding site" evidence="1">
    <location>
        <position position="169"/>
    </location>
    <ligand>
        <name>ATP</name>
        <dbReference type="ChEBI" id="CHEBI:30616"/>
    </ligand>
</feature>
<sequence length="235" mass="25853">MKYRRVLLKLSGEALMGDREFGIDPEVVKSLAGEIARVVEAGTELAVVVGGGNIFRGVKASSSGMDRATADYVGMLATVMNALTLQDALEQQFQVQTRLLSAIEMKEVAEPFIRRRAMRHLEKGRVVIFGAGSGNPFFTTDTTAALRAAEIDAQVIFKATRVDGIYDSDPKFNPQAVRFEKITFHEVLVQNLRVMDSTAIALCRENNIPILVFNVFEKNSIYRAVQGEAVGTYVC</sequence>
<organism>
    <name type="scientific">Gloeobacter violaceus (strain ATCC 29082 / PCC 7421)</name>
    <dbReference type="NCBI Taxonomy" id="251221"/>
    <lineage>
        <taxon>Bacteria</taxon>
        <taxon>Bacillati</taxon>
        <taxon>Cyanobacteriota</taxon>
        <taxon>Cyanophyceae</taxon>
        <taxon>Gloeobacterales</taxon>
        <taxon>Gloeobacteraceae</taxon>
        <taxon>Gloeobacter</taxon>
    </lineage>
</organism>
<comment type="function">
    <text evidence="1">Catalyzes the reversible phosphorylation of UMP to UDP.</text>
</comment>
<comment type="catalytic activity">
    <reaction evidence="1">
        <text>UMP + ATP = UDP + ADP</text>
        <dbReference type="Rhea" id="RHEA:24400"/>
        <dbReference type="ChEBI" id="CHEBI:30616"/>
        <dbReference type="ChEBI" id="CHEBI:57865"/>
        <dbReference type="ChEBI" id="CHEBI:58223"/>
        <dbReference type="ChEBI" id="CHEBI:456216"/>
        <dbReference type="EC" id="2.7.4.22"/>
    </reaction>
</comment>
<comment type="activity regulation">
    <text evidence="1">Inhibited by UTP.</text>
</comment>
<comment type="pathway">
    <text evidence="1">Pyrimidine metabolism; CTP biosynthesis via de novo pathway; UDP from UMP (UMPK route): step 1/1.</text>
</comment>
<comment type="subunit">
    <text evidence="1">Homohexamer.</text>
</comment>
<comment type="subcellular location">
    <subcellularLocation>
        <location evidence="1">Cytoplasm</location>
    </subcellularLocation>
</comment>
<comment type="similarity">
    <text evidence="1">Belongs to the UMP kinase family.</text>
</comment>
<proteinExistence type="inferred from homology"/>
<dbReference type="EC" id="2.7.4.22" evidence="1"/>
<dbReference type="EMBL" id="BA000045">
    <property type="protein sequence ID" value="BAC90281.1"/>
    <property type="molecule type" value="Genomic_DNA"/>
</dbReference>
<dbReference type="RefSeq" id="NP_925286.1">
    <property type="nucleotide sequence ID" value="NC_005125.1"/>
</dbReference>
<dbReference type="RefSeq" id="WP_011142336.1">
    <property type="nucleotide sequence ID" value="NC_005125.1"/>
</dbReference>
<dbReference type="SMR" id="Q7NI44"/>
<dbReference type="FunCoup" id="Q7NI44">
    <property type="interactions" value="272"/>
</dbReference>
<dbReference type="STRING" id="251221.gene:10759837"/>
<dbReference type="EnsemblBacteria" id="BAC90281">
    <property type="protein sequence ID" value="BAC90281"/>
    <property type="gene ID" value="BAC90281"/>
</dbReference>
<dbReference type="KEGG" id="gvi:gll2340"/>
<dbReference type="PATRIC" id="fig|251221.4.peg.2378"/>
<dbReference type="eggNOG" id="COG0528">
    <property type="taxonomic scope" value="Bacteria"/>
</dbReference>
<dbReference type="HOGENOM" id="CLU_033861_0_0_3"/>
<dbReference type="InParanoid" id="Q7NI44"/>
<dbReference type="OrthoDB" id="9807458at2"/>
<dbReference type="PhylomeDB" id="Q7NI44"/>
<dbReference type="UniPathway" id="UPA00159">
    <property type="reaction ID" value="UER00275"/>
</dbReference>
<dbReference type="Proteomes" id="UP000000557">
    <property type="component" value="Chromosome"/>
</dbReference>
<dbReference type="GO" id="GO:0005737">
    <property type="term" value="C:cytoplasm"/>
    <property type="evidence" value="ECO:0007669"/>
    <property type="project" value="UniProtKB-SubCell"/>
</dbReference>
<dbReference type="GO" id="GO:0005524">
    <property type="term" value="F:ATP binding"/>
    <property type="evidence" value="ECO:0007669"/>
    <property type="project" value="UniProtKB-KW"/>
</dbReference>
<dbReference type="GO" id="GO:0033862">
    <property type="term" value="F:UMP kinase activity"/>
    <property type="evidence" value="ECO:0000318"/>
    <property type="project" value="GO_Central"/>
</dbReference>
<dbReference type="GO" id="GO:0044210">
    <property type="term" value="P:'de novo' CTP biosynthetic process"/>
    <property type="evidence" value="ECO:0007669"/>
    <property type="project" value="UniProtKB-UniRule"/>
</dbReference>
<dbReference type="GO" id="GO:0006225">
    <property type="term" value="P:UDP biosynthetic process"/>
    <property type="evidence" value="ECO:0000318"/>
    <property type="project" value="GO_Central"/>
</dbReference>
<dbReference type="CDD" id="cd04254">
    <property type="entry name" value="AAK_UMPK-PyrH-Ec"/>
    <property type="match status" value="1"/>
</dbReference>
<dbReference type="FunFam" id="3.40.1160.10:FF:000001">
    <property type="entry name" value="Uridylate kinase"/>
    <property type="match status" value="1"/>
</dbReference>
<dbReference type="Gene3D" id="3.40.1160.10">
    <property type="entry name" value="Acetylglutamate kinase-like"/>
    <property type="match status" value="1"/>
</dbReference>
<dbReference type="HAMAP" id="MF_01220_B">
    <property type="entry name" value="PyrH_B"/>
    <property type="match status" value="1"/>
</dbReference>
<dbReference type="InterPro" id="IPR036393">
    <property type="entry name" value="AceGlu_kinase-like_sf"/>
</dbReference>
<dbReference type="InterPro" id="IPR001048">
    <property type="entry name" value="Asp/Glu/Uridylate_kinase"/>
</dbReference>
<dbReference type="InterPro" id="IPR011817">
    <property type="entry name" value="Uridylate_kinase"/>
</dbReference>
<dbReference type="InterPro" id="IPR015963">
    <property type="entry name" value="Uridylate_kinase_bac"/>
</dbReference>
<dbReference type="NCBIfam" id="TIGR02075">
    <property type="entry name" value="pyrH_bact"/>
    <property type="match status" value="1"/>
</dbReference>
<dbReference type="PANTHER" id="PTHR42833">
    <property type="entry name" value="URIDYLATE KINASE"/>
    <property type="match status" value="1"/>
</dbReference>
<dbReference type="PANTHER" id="PTHR42833:SF4">
    <property type="entry name" value="URIDYLATE KINASE PUMPKIN, CHLOROPLASTIC"/>
    <property type="match status" value="1"/>
</dbReference>
<dbReference type="Pfam" id="PF00696">
    <property type="entry name" value="AA_kinase"/>
    <property type="match status" value="1"/>
</dbReference>
<dbReference type="PIRSF" id="PIRSF005650">
    <property type="entry name" value="Uridylate_kin"/>
    <property type="match status" value="1"/>
</dbReference>
<dbReference type="SUPFAM" id="SSF53633">
    <property type="entry name" value="Carbamate kinase-like"/>
    <property type="match status" value="1"/>
</dbReference>
<evidence type="ECO:0000255" key="1">
    <source>
        <dbReference type="HAMAP-Rule" id="MF_01220"/>
    </source>
</evidence>
<reference key="1">
    <citation type="journal article" date="2003" name="DNA Res.">
        <title>Complete genome structure of Gloeobacter violaceus PCC 7421, a cyanobacterium that lacks thylakoids.</title>
        <authorList>
            <person name="Nakamura Y."/>
            <person name="Kaneko T."/>
            <person name="Sato S."/>
            <person name="Mimuro M."/>
            <person name="Miyashita H."/>
            <person name="Tsuchiya T."/>
            <person name="Sasamoto S."/>
            <person name="Watanabe A."/>
            <person name="Kawashima K."/>
            <person name="Kishida Y."/>
            <person name="Kiyokawa C."/>
            <person name="Kohara M."/>
            <person name="Matsumoto M."/>
            <person name="Matsuno A."/>
            <person name="Nakazaki N."/>
            <person name="Shimpo S."/>
            <person name="Takeuchi C."/>
            <person name="Yamada M."/>
            <person name="Tabata S."/>
        </authorList>
    </citation>
    <scope>NUCLEOTIDE SEQUENCE [LARGE SCALE GENOMIC DNA]</scope>
    <source>
        <strain>ATCC 29082 / PCC 7421</strain>
    </source>
</reference>
<name>PYRH_GLOVI</name>